<gene>
    <name type="primary">pldB</name>
    <name type="synonym">pld1</name>
    <name type="ORF">DDB_G0279483</name>
</gene>
<accession>Q54WR4</accession>
<organism>
    <name type="scientific">Dictyostelium discoideum</name>
    <name type="common">Social amoeba</name>
    <dbReference type="NCBI Taxonomy" id="44689"/>
    <lineage>
        <taxon>Eukaryota</taxon>
        <taxon>Amoebozoa</taxon>
        <taxon>Evosea</taxon>
        <taxon>Eumycetozoa</taxon>
        <taxon>Dictyostelia</taxon>
        <taxon>Dictyosteliales</taxon>
        <taxon>Dictyosteliaceae</taxon>
        <taxon>Dictyostelium</taxon>
    </lineage>
</organism>
<comment type="function">
    <text evidence="5 6 8 9">Plays a role in cell growth. Hydrolyzes membrane phospholipids, such as PtdCho (phosphatidylcholine), producing the free headgroup and PtdOH (phosphatidic acid; signaling molecule on its own). Involved in the inhibition of actin-based motility and endocytosis. Its inhibition causes complete collapse of F-actin organization. Plays an important role in cell migration by localizing along the anterior cell membrane. Overexpression leads to the inability to aggregate even at higher cell density. Also known as a negative regulator of quorum sensing.</text>
</comment>
<comment type="catalytic activity">
    <reaction>
        <text>a 1,2-diacyl-sn-glycero-3-phosphocholine + H2O = a 1,2-diacyl-sn-glycero-3-phosphate + choline + H(+)</text>
        <dbReference type="Rhea" id="RHEA:14445"/>
        <dbReference type="ChEBI" id="CHEBI:15354"/>
        <dbReference type="ChEBI" id="CHEBI:15377"/>
        <dbReference type="ChEBI" id="CHEBI:15378"/>
        <dbReference type="ChEBI" id="CHEBI:57643"/>
        <dbReference type="ChEBI" id="CHEBI:58608"/>
        <dbReference type="EC" id="3.1.4.4"/>
    </reaction>
</comment>
<comment type="activity regulation">
    <text evidence="5">Inhibited by butan-1-ol.</text>
</comment>
<comment type="subcellular location">
    <subcellularLocation>
        <location evidence="7">Cytoplasmic vesicle</location>
    </subcellularLocation>
    <subcellularLocation>
        <location evidence="7">Cytoplasm</location>
        <location evidence="7">Cell cortex</location>
    </subcellularLocation>
    <text>In migrating cells, localized at the protruding regions of pseudopodia.</text>
</comment>
<comment type="developmental stage">
    <text evidence="6">Not expressed in vegetative cells. Expression is apparent by 8 hours and peaked by 16 hours. Becomes present during aggregation and throughout development.</text>
</comment>
<comment type="disruption phenotype">
    <text evidence="6 7">Null cells show a motility defect; migration speed of vegetative cells is reduced to 73% of that of the wild-type, an aggregation ability at lower cell density and an ability to initiate and finish aggregation rapidly. Have altered cAR1 expression.</text>
</comment>
<comment type="similarity">
    <text evidence="10">Belongs to the phospholipase D family.</text>
</comment>
<reference key="1">
    <citation type="journal article" date="2005" name="Nature">
        <title>The genome of the social amoeba Dictyostelium discoideum.</title>
        <authorList>
            <person name="Eichinger L."/>
            <person name="Pachebat J.A."/>
            <person name="Gloeckner G."/>
            <person name="Rajandream M.A."/>
            <person name="Sucgang R."/>
            <person name="Berriman M."/>
            <person name="Song J."/>
            <person name="Olsen R."/>
            <person name="Szafranski K."/>
            <person name="Xu Q."/>
            <person name="Tunggal B."/>
            <person name="Kummerfeld S."/>
            <person name="Madera M."/>
            <person name="Konfortov B.A."/>
            <person name="Rivero F."/>
            <person name="Bankier A.T."/>
            <person name="Lehmann R."/>
            <person name="Hamlin N."/>
            <person name="Davies R."/>
            <person name="Gaudet P."/>
            <person name="Fey P."/>
            <person name="Pilcher K."/>
            <person name="Chen G."/>
            <person name="Saunders D."/>
            <person name="Sodergren E.J."/>
            <person name="Davis P."/>
            <person name="Kerhornou A."/>
            <person name="Nie X."/>
            <person name="Hall N."/>
            <person name="Anjard C."/>
            <person name="Hemphill L."/>
            <person name="Bason N."/>
            <person name="Farbrother P."/>
            <person name="Desany B."/>
            <person name="Just E."/>
            <person name="Morio T."/>
            <person name="Rost R."/>
            <person name="Churcher C.M."/>
            <person name="Cooper J."/>
            <person name="Haydock S."/>
            <person name="van Driessche N."/>
            <person name="Cronin A."/>
            <person name="Goodhead I."/>
            <person name="Muzny D.M."/>
            <person name="Mourier T."/>
            <person name="Pain A."/>
            <person name="Lu M."/>
            <person name="Harper D."/>
            <person name="Lindsay R."/>
            <person name="Hauser H."/>
            <person name="James K.D."/>
            <person name="Quiles M."/>
            <person name="Madan Babu M."/>
            <person name="Saito T."/>
            <person name="Buchrieser C."/>
            <person name="Wardroper A."/>
            <person name="Felder M."/>
            <person name="Thangavelu M."/>
            <person name="Johnson D."/>
            <person name="Knights A."/>
            <person name="Loulseged H."/>
            <person name="Mungall K.L."/>
            <person name="Oliver K."/>
            <person name="Price C."/>
            <person name="Quail M.A."/>
            <person name="Urushihara H."/>
            <person name="Hernandez J."/>
            <person name="Rabbinowitsch E."/>
            <person name="Steffen D."/>
            <person name="Sanders M."/>
            <person name="Ma J."/>
            <person name="Kohara Y."/>
            <person name="Sharp S."/>
            <person name="Simmonds M.N."/>
            <person name="Spiegler S."/>
            <person name="Tivey A."/>
            <person name="Sugano S."/>
            <person name="White B."/>
            <person name="Walker D."/>
            <person name="Woodward J.R."/>
            <person name="Winckler T."/>
            <person name="Tanaka Y."/>
            <person name="Shaulsky G."/>
            <person name="Schleicher M."/>
            <person name="Weinstock G.M."/>
            <person name="Rosenthal A."/>
            <person name="Cox E.C."/>
            <person name="Chisholm R.L."/>
            <person name="Gibbs R.A."/>
            <person name="Loomis W.F."/>
            <person name="Platzer M."/>
            <person name="Kay R.R."/>
            <person name="Williams J.G."/>
            <person name="Dear P.H."/>
            <person name="Noegel A.A."/>
            <person name="Barrell B.G."/>
            <person name="Kuspa A."/>
        </authorList>
    </citation>
    <scope>NUCLEOTIDE SEQUENCE [LARGE SCALE GENOMIC DNA]</scope>
    <source>
        <strain>AX4</strain>
    </source>
</reference>
<reference key="2">
    <citation type="journal article" date="1984" name="Biochim. Biophys. Acta">
        <title>Comparison of the hydrolysis of phosphatidylethanolamine and phosphatidyl(N-acyl)ethanolamine in Dictyostelium discoideum amoebae.</title>
        <authorList>
            <person name="Ellingson J.S."/>
            <person name="Dischinger H.C."/>
        </authorList>
    </citation>
    <scope>FUNCTION</scope>
</reference>
<reference key="3">
    <citation type="journal article" date="1993" name="J. Biol. Chem.">
        <title>Developmentally regulated changes in 1,2-diacylglycerol in Dictyostelium. Regulation by light and G proteins.</title>
        <authorList>
            <person name="Cubitt A.B."/>
            <person name="Dharmawardhane S."/>
            <person name="Firtel R.A."/>
        </authorList>
    </citation>
    <scope>FUNCTION</scope>
</reference>
<reference key="4">
    <citation type="journal article" date="2004" name="FEBS Lett.">
        <title>A distant evolutionary relationship between GPI-specific phospholipase D and bacterial phosphatidylcholine-preferring phospholipase C.</title>
        <authorList>
            <person name="Rigden D.J."/>
        </authorList>
    </citation>
    <scope>NOMENCLATURE</scope>
</reference>
<reference key="5">
    <citation type="journal article" date="2005" name="Biochem. J.">
        <title>Phospholipase D activity is essential for actin localization and actin-based motility in Dictyostelium.</title>
        <authorList>
            <person name="Zouwail S."/>
            <person name="Pettitt T.R."/>
            <person name="Dove S.K."/>
            <person name="Chibalina M.V."/>
            <person name="Powner D.J."/>
            <person name="Haynes L."/>
            <person name="Wakelam M.J.O."/>
            <person name="Insall R.H."/>
        </authorList>
    </citation>
    <scope>ACTIVITY REGULATION</scope>
    <scope>FUNCTION</scope>
</reference>
<reference key="6">
    <citation type="journal article" date="2005" name="Eukaryot. Cell">
        <title>PldB, a putative phospholipase D homologue in Dictyostelium discoideum mediates quorum sensing during development.</title>
        <authorList>
            <person name="Chen Y."/>
            <person name="Rodrick V."/>
            <person name="Yan Y."/>
            <person name="Brazill D."/>
        </authorList>
    </citation>
    <scope>FUNCTION</scope>
    <scope>DISRUPTION PHENOTYPE</scope>
    <scope>DEVELOPMENTAL STAGE</scope>
</reference>
<reference key="7">
    <citation type="journal article" date="2006" name="Eur. J. Cell Biol.">
        <title>Rho GTPase signaling in Dictyostelium discoideum: insights from the genome.</title>
        <authorList>
            <person name="Vlahou G."/>
            <person name="Rivero F."/>
        </authorList>
    </citation>
    <scope>NOMENCLATURE</scope>
</reference>
<reference key="8">
    <citation type="journal article" date="2008" name="Exp. Cell Res.">
        <title>Screening of genes involved in cell migration in Dictyostelium.</title>
        <authorList>
            <person name="Nagasaki A."/>
            <person name="Uyeda T.Q.P."/>
        </authorList>
    </citation>
    <scope>DISRUPTION PHENOTYPE</scope>
    <scope>SUBCELLULAR LOCATION</scope>
</reference>
<feature type="chain" id="PRO_0000367471" description="Phospholipase D B">
    <location>
        <begin position="1"/>
        <end position="1216"/>
    </location>
</feature>
<feature type="domain" description="EF-hand 1" evidence="3">
    <location>
        <begin position="196"/>
        <end position="231"/>
    </location>
</feature>
<feature type="domain" description="EF-hand 2" evidence="3">
    <location>
        <begin position="232"/>
        <end position="267"/>
    </location>
</feature>
<feature type="domain" description="PH" evidence="1">
    <location>
        <begin position="347"/>
        <end position="462"/>
    </location>
</feature>
<feature type="domain" description="PLD phosphodiesterase 1" evidence="2">
    <location>
        <begin position="585"/>
        <end position="612"/>
    </location>
</feature>
<feature type="domain" description="PLD phosphodiesterase 2" evidence="2">
    <location>
        <begin position="1036"/>
        <end position="1063"/>
    </location>
</feature>
<feature type="region of interest" description="Disordered" evidence="4">
    <location>
        <begin position="1"/>
        <end position="48"/>
    </location>
</feature>
<feature type="region of interest" description="Disordered" evidence="4">
    <location>
        <begin position="732"/>
        <end position="844"/>
    </location>
</feature>
<feature type="compositionally biased region" description="Polar residues" evidence="4">
    <location>
        <begin position="1"/>
        <end position="14"/>
    </location>
</feature>
<feature type="compositionally biased region" description="Basic and acidic residues" evidence="4">
    <location>
        <begin position="17"/>
        <end position="33"/>
    </location>
</feature>
<feature type="compositionally biased region" description="Low complexity" evidence="4">
    <location>
        <begin position="776"/>
        <end position="789"/>
    </location>
</feature>
<feature type="compositionally biased region" description="Acidic residues" evidence="4">
    <location>
        <begin position="790"/>
        <end position="813"/>
    </location>
</feature>
<feature type="active site" evidence="2">
    <location>
        <position position="590"/>
    </location>
</feature>
<feature type="active site" evidence="2">
    <location>
        <position position="592"/>
    </location>
</feature>
<feature type="active site" evidence="2">
    <location>
        <position position="597"/>
    </location>
</feature>
<feature type="active site" evidence="2">
    <location>
        <position position="1041"/>
    </location>
</feature>
<feature type="active site" evidence="2">
    <location>
        <position position="1043"/>
    </location>
</feature>
<feature type="active site" evidence="2">
    <location>
        <position position="1048"/>
    </location>
</feature>
<feature type="binding site" evidence="3">
    <location>
        <position position="209"/>
    </location>
    <ligand>
        <name>Ca(2+)</name>
        <dbReference type="ChEBI" id="CHEBI:29108"/>
    </ligand>
</feature>
<feature type="binding site" evidence="3">
    <location>
        <position position="211"/>
    </location>
    <ligand>
        <name>Ca(2+)</name>
        <dbReference type="ChEBI" id="CHEBI:29108"/>
    </ligand>
</feature>
<feature type="binding site" evidence="3">
    <location>
        <position position="213"/>
    </location>
    <ligand>
        <name>Ca(2+)</name>
        <dbReference type="ChEBI" id="CHEBI:29108"/>
    </ligand>
</feature>
<feature type="binding site" evidence="3">
    <location>
        <position position="215"/>
    </location>
    <ligand>
        <name>Ca(2+)</name>
        <dbReference type="ChEBI" id="CHEBI:29108"/>
    </ligand>
</feature>
<feature type="binding site" evidence="3">
    <location>
        <position position="220"/>
    </location>
    <ligand>
        <name>Ca(2+)</name>
        <dbReference type="ChEBI" id="CHEBI:29108"/>
    </ligand>
</feature>
<keyword id="KW-0106">Calcium</keyword>
<keyword id="KW-0963">Cytoplasm</keyword>
<keyword id="KW-0968">Cytoplasmic vesicle</keyword>
<keyword id="KW-0378">Hydrolase</keyword>
<keyword id="KW-0442">Lipid degradation</keyword>
<keyword id="KW-0443">Lipid metabolism</keyword>
<keyword id="KW-0479">Metal-binding</keyword>
<keyword id="KW-1185">Reference proteome</keyword>
<keyword id="KW-0677">Repeat</keyword>
<name>PLDB_DICDI</name>
<proteinExistence type="evidence at transcript level"/>
<protein>
    <recommendedName>
        <fullName>Phospholipase D B</fullName>
        <ecNumber>3.1.4.4</ecNumber>
    </recommendedName>
    <alternativeName>
        <fullName>Phosphatase D1</fullName>
        <shortName>PLD 1</shortName>
    </alternativeName>
</protein>
<sequence>MNLSQEHAINQNLHKNQKNEEKIEKKTINKDGRGQMNYDGEEGQGEKSRFQKMVENEKIEEPQQKDENIPNTDVIERKEVGVIERINSEDVPILMTDNATDYKVLQHNLKKGKVSKKSKEQIEQISKQEENDMLEYLKNYKSNEEFTIQLEDLLSFETYFSRDELHLLYREFKTISKSGMFMSKEDFISKLTPFSRNADLTISLMNAIDRNGDQKIAFPEFVQALSIMCRGTKKERLRFTFEICDFNGDSLVSRDEVYSTVKAISDIFSKFGYSKDKFGDPSEAVDSIFSSGLTTNGIYLHNKKELTLNEFLERGELNPDLSKCFGMFDYFYLKFIGQIDLLFKDKEINMNGQLTKIKPKTIFNFNISHRRTLSLRDGFLIVYKKKKFKHDEDKPSKVIFLPGSTVKVVVGSQPSKKKKFLSKKFHNYYGFRVTKGNYNRFFLMENRDEALNWVNAIRFHSRQGFRFQSFSKVRSNISVEWFINGSSYYNELAETIRRAKHEIFITGWWVSPYVYLQRDNGIENMEKSRLDRILTEKAKEGVKVYVLMWNETNLGVQLGSRHAKNWLEGCHSNIHVIRHPKRYPLSWSHHQKNAIIDQQIAFVGGIDICLMRYETSKFQLTDDQGKRFPGKDYGNLLGTVIRTGDPKKDQFNRRECPRMPWHDVHTKIVGPSAKDVASNFIQRWNHAIYVERSNRFQPILVPKNYTGLPSDDAKPDKWKNLVSNIRKGFSHVSYGREKPTHYQRAGDNPKVRSHTRQGAFGLQSDQIDNKIDKQKNNSTNSENSENSYSEFDEEDEEGNQEEEDEDEFDEFEKDENQKQENSKIPFNNKPSDAGGLKSKNYKNNNNNNIIESLKDEESFELPGTPKIDLNNDKLLKSIYHLSSNMSENSCVVQMVRSICPWSAGTDVEDSCYKAYLGLIKNAQHFIYIQNLFFISSCGSKLPKNRIALAILNRVRRAITLKEKFRVIIMVPISPSGDLALASSRMIIGWTNRTISQGGQSILELLKNEFPDVDLDQYISFNSIRQWEANGDRIFTEQIYVHSKVLIVDDRVAVIGSCNINDRSMMGSRDSELAVVVSDQSKLLITMNGKPFKVGKFPHTLRVGLWKTHLNLTDSEISSIIDPITDNAFINIWRKTARNNSIIYKEVFGDCILENQRRLGIVQKKYIPKTNELIVQLSQIQGVLIEYPLDMFCESNLFNEQVGIFTAESYVDVSIFT</sequence>
<dbReference type="EC" id="3.1.4.4"/>
<dbReference type="EMBL" id="AAFI02000031">
    <property type="protein sequence ID" value="EAL67680.1"/>
    <property type="molecule type" value="Genomic_DNA"/>
</dbReference>
<dbReference type="RefSeq" id="XP_641653.1">
    <property type="nucleotide sequence ID" value="XM_636561.1"/>
</dbReference>
<dbReference type="SMR" id="Q54WR4"/>
<dbReference type="FunCoup" id="Q54WR4">
    <property type="interactions" value="84"/>
</dbReference>
<dbReference type="STRING" id="44689.Q54WR4"/>
<dbReference type="PaxDb" id="44689-DDB0231507"/>
<dbReference type="EnsemblProtists" id="EAL67680">
    <property type="protein sequence ID" value="EAL67680"/>
    <property type="gene ID" value="DDB_G0279483"/>
</dbReference>
<dbReference type="GeneID" id="8622060"/>
<dbReference type="KEGG" id="ddi:DDB_G0279483"/>
<dbReference type="dictyBase" id="DDB_G0279483">
    <property type="gene designation" value="pldB"/>
</dbReference>
<dbReference type="VEuPathDB" id="AmoebaDB:DDB_G0279483"/>
<dbReference type="eggNOG" id="KOG0044">
    <property type="taxonomic scope" value="Eukaryota"/>
</dbReference>
<dbReference type="eggNOG" id="KOG1329">
    <property type="taxonomic scope" value="Eukaryota"/>
</dbReference>
<dbReference type="HOGENOM" id="CLU_269219_0_0_1"/>
<dbReference type="InParanoid" id="Q54WR4"/>
<dbReference type="OMA" id="IGSCNIN"/>
<dbReference type="PhylomeDB" id="Q54WR4"/>
<dbReference type="BRENDA" id="3.1.4.4">
    <property type="organism ID" value="1939"/>
</dbReference>
<dbReference type="Reactome" id="R-DDI-1483166">
    <property type="pathway name" value="Synthesis of PA"/>
</dbReference>
<dbReference type="Reactome" id="R-DDI-2029485">
    <property type="pathway name" value="Role of phospholipids in phagocytosis"/>
</dbReference>
<dbReference type="Reactome" id="R-DDI-6798695">
    <property type="pathway name" value="Neutrophil degranulation"/>
</dbReference>
<dbReference type="Reactome" id="R-DDI-9013149">
    <property type="pathway name" value="RAC1 GTPase cycle"/>
</dbReference>
<dbReference type="Reactome" id="R-DDI-9013408">
    <property type="pathway name" value="RHOG GTPase cycle"/>
</dbReference>
<dbReference type="PRO" id="PR:Q54WR4"/>
<dbReference type="Proteomes" id="UP000002195">
    <property type="component" value="Chromosome 3"/>
</dbReference>
<dbReference type="GO" id="GO:0005938">
    <property type="term" value="C:cell cortex"/>
    <property type="evidence" value="ECO:0000314"/>
    <property type="project" value="dictyBase"/>
</dbReference>
<dbReference type="GO" id="GO:0031410">
    <property type="term" value="C:cytoplasmic vesicle"/>
    <property type="evidence" value="ECO:0007669"/>
    <property type="project" value="UniProtKB-KW"/>
</dbReference>
<dbReference type="GO" id="GO:0031941">
    <property type="term" value="C:filamentous actin"/>
    <property type="evidence" value="ECO:0000314"/>
    <property type="project" value="dictyBase"/>
</dbReference>
<dbReference type="GO" id="GO:0016020">
    <property type="term" value="C:membrane"/>
    <property type="evidence" value="ECO:0000250"/>
    <property type="project" value="dictyBase"/>
</dbReference>
<dbReference type="GO" id="GO:0032991">
    <property type="term" value="C:protein-containing complex"/>
    <property type="evidence" value="ECO:0000314"/>
    <property type="project" value="dictyBase"/>
</dbReference>
<dbReference type="GO" id="GO:0031143">
    <property type="term" value="C:pseudopodium"/>
    <property type="evidence" value="ECO:0000314"/>
    <property type="project" value="dictyBase"/>
</dbReference>
<dbReference type="GO" id="GO:0005773">
    <property type="term" value="C:vacuole"/>
    <property type="evidence" value="ECO:0000314"/>
    <property type="project" value="dictyBase"/>
</dbReference>
<dbReference type="GO" id="GO:0031982">
    <property type="term" value="C:vesicle"/>
    <property type="evidence" value="ECO:0000314"/>
    <property type="project" value="dictyBase"/>
</dbReference>
<dbReference type="GO" id="GO:0005509">
    <property type="term" value="F:calcium ion binding"/>
    <property type="evidence" value="ECO:0007669"/>
    <property type="project" value="InterPro"/>
</dbReference>
<dbReference type="GO" id="GO:0004630">
    <property type="term" value="F:phospholipase D activity"/>
    <property type="evidence" value="ECO:0000314"/>
    <property type="project" value="dictyBase"/>
</dbReference>
<dbReference type="GO" id="GO:0048870">
    <property type="term" value="P:cell motility"/>
    <property type="evidence" value="ECO:0000315"/>
    <property type="project" value="dictyBase"/>
</dbReference>
<dbReference type="GO" id="GO:0043327">
    <property type="term" value="P:chemotaxis to cAMP"/>
    <property type="evidence" value="ECO:0000315"/>
    <property type="project" value="dictyBase"/>
</dbReference>
<dbReference type="GO" id="GO:0010467">
    <property type="term" value="P:gene expression"/>
    <property type="evidence" value="ECO:0000314"/>
    <property type="project" value="dictyBase"/>
</dbReference>
<dbReference type="GO" id="GO:0009395">
    <property type="term" value="P:phospholipid catabolic process"/>
    <property type="evidence" value="ECO:0000318"/>
    <property type="project" value="GO_Central"/>
</dbReference>
<dbReference type="GO" id="GO:0006644">
    <property type="term" value="P:phospholipid metabolic process"/>
    <property type="evidence" value="ECO:0000250"/>
    <property type="project" value="dictyBase"/>
</dbReference>
<dbReference type="GO" id="GO:0045921">
    <property type="term" value="P:positive regulation of exocytosis"/>
    <property type="evidence" value="ECO:0000315"/>
    <property type="project" value="dictyBase"/>
</dbReference>
<dbReference type="GO" id="GO:1901263">
    <property type="term" value="P:positive regulation of sorocarp spore cell differentiation"/>
    <property type="evidence" value="ECO:0000315"/>
    <property type="project" value="dictyBase"/>
</dbReference>
<dbReference type="GO" id="GO:0009372">
    <property type="term" value="P:quorum sensing"/>
    <property type="evidence" value="ECO:0000315"/>
    <property type="project" value="dictyBase"/>
</dbReference>
<dbReference type="GO" id="GO:0032956">
    <property type="term" value="P:regulation of actin cytoskeleton organization"/>
    <property type="evidence" value="ECO:0000315"/>
    <property type="project" value="dictyBase"/>
</dbReference>
<dbReference type="GO" id="GO:0060176">
    <property type="term" value="P:regulation of aggregation involved in sorocarp development"/>
    <property type="evidence" value="ECO:0000315"/>
    <property type="project" value="dictyBase"/>
</dbReference>
<dbReference type="GO" id="GO:0008277">
    <property type="term" value="P:regulation of G protein-coupled receptor signaling pathway"/>
    <property type="evidence" value="ECO:0000315"/>
    <property type="project" value="dictyBase"/>
</dbReference>
<dbReference type="GO" id="GO:0048837">
    <property type="term" value="P:sorocarp sorus development"/>
    <property type="evidence" value="ECO:0000315"/>
    <property type="project" value="dictyBase"/>
</dbReference>
<dbReference type="GO" id="GO:0044671">
    <property type="term" value="P:sorocarp spore cell differentiation"/>
    <property type="evidence" value="ECO:0000316"/>
    <property type="project" value="dictyBase"/>
</dbReference>
<dbReference type="CDD" id="cd00821">
    <property type="entry name" value="PH"/>
    <property type="match status" value="1"/>
</dbReference>
<dbReference type="CDD" id="cd09138">
    <property type="entry name" value="PLDc_vPLD1_2_yPLD_like_1"/>
    <property type="match status" value="1"/>
</dbReference>
<dbReference type="CDD" id="cd09141">
    <property type="entry name" value="PLDc_vPLD1_2_yPLD_like_2"/>
    <property type="match status" value="1"/>
</dbReference>
<dbReference type="FunFam" id="1.10.238.10:FF:000862">
    <property type="entry name" value="Phospholipase D B"/>
    <property type="match status" value="1"/>
</dbReference>
<dbReference type="FunFam" id="2.30.29.30:FF:000944">
    <property type="entry name" value="Phospholipase D B"/>
    <property type="match status" value="1"/>
</dbReference>
<dbReference type="FunFam" id="3.30.870.10:FF:000142">
    <property type="entry name" value="Phospholipase D B"/>
    <property type="match status" value="1"/>
</dbReference>
<dbReference type="Gene3D" id="1.10.238.10">
    <property type="entry name" value="EF-hand"/>
    <property type="match status" value="1"/>
</dbReference>
<dbReference type="Gene3D" id="3.30.870.10">
    <property type="entry name" value="Endonuclease Chain A"/>
    <property type="match status" value="2"/>
</dbReference>
<dbReference type="Gene3D" id="2.30.29.30">
    <property type="entry name" value="Pleckstrin-homology domain (PH domain)/Phosphotyrosine-binding domain (PTB)"/>
    <property type="match status" value="1"/>
</dbReference>
<dbReference type="InterPro" id="IPR011992">
    <property type="entry name" value="EF-hand-dom_pair"/>
</dbReference>
<dbReference type="InterPro" id="IPR018247">
    <property type="entry name" value="EF_Hand_1_Ca_BS"/>
</dbReference>
<dbReference type="InterPro" id="IPR002048">
    <property type="entry name" value="EF_hand_dom"/>
</dbReference>
<dbReference type="InterPro" id="IPR011993">
    <property type="entry name" value="PH-like_dom_sf"/>
</dbReference>
<dbReference type="InterPro" id="IPR001849">
    <property type="entry name" value="PH_domain"/>
</dbReference>
<dbReference type="InterPro" id="IPR025202">
    <property type="entry name" value="PLD-like_dom"/>
</dbReference>
<dbReference type="InterPro" id="IPR001736">
    <property type="entry name" value="PLipase_D/transphosphatidylase"/>
</dbReference>
<dbReference type="InterPro" id="IPR015679">
    <property type="entry name" value="PLipase_D_fam"/>
</dbReference>
<dbReference type="PANTHER" id="PTHR18896:SF76">
    <property type="entry name" value="PHOSPHOLIPASE"/>
    <property type="match status" value="1"/>
</dbReference>
<dbReference type="PANTHER" id="PTHR18896">
    <property type="entry name" value="PHOSPHOLIPASE D"/>
    <property type="match status" value="1"/>
</dbReference>
<dbReference type="Pfam" id="PF00169">
    <property type="entry name" value="PH"/>
    <property type="match status" value="1"/>
</dbReference>
<dbReference type="Pfam" id="PF13091">
    <property type="entry name" value="PLDc_2"/>
    <property type="match status" value="1"/>
</dbReference>
<dbReference type="PRINTS" id="PR00450">
    <property type="entry name" value="RECOVERIN"/>
</dbReference>
<dbReference type="SMART" id="SM00054">
    <property type="entry name" value="EFh"/>
    <property type="match status" value="2"/>
</dbReference>
<dbReference type="SMART" id="SM00233">
    <property type="entry name" value="PH"/>
    <property type="match status" value="1"/>
</dbReference>
<dbReference type="SMART" id="SM00155">
    <property type="entry name" value="PLDc"/>
    <property type="match status" value="2"/>
</dbReference>
<dbReference type="SUPFAM" id="SSF47473">
    <property type="entry name" value="EF-hand"/>
    <property type="match status" value="1"/>
</dbReference>
<dbReference type="SUPFAM" id="SSF50729">
    <property type="entry name" value="PH domain-like"/>
    <property type="match status" value="1"/>
</dbReference>
<dbReference type="SUPFAM" id="SSF56024">
    <property type="entry name" value="Phospholipase D/nuclease"/>
    <property type="match status" value="2"/>
</dbReference>
<dbReference type="PROSITE" id="PS00018">
    <property type="entry name" value="EF_HAND_1"/>
    <property type="match status" value="1"/>
</dbReference>
<dbReference type="PROSITE" id="PS50222">
    <property type="entry name" value="EF_HAND_2"/>
    <property type="match status" value="2"/>
</dbReference>
<dbReference type="PROSITE" id="PS50003">
    <property type="entry name" value="PH_DOMAIN"/>
    <property type="match status" value="1"/>
</dbReference>
<dbReference type="PROSITE" id="PS50035">
    <property type="entry name" value="PLD"/>
    <property type="match status" value="2"/>
</dbReference>
<evidence type="ECO:0000255" key="1">
    <source>
        <dbReference type="PROSITE-ProRule" id="PRU00145"/>
    </source>
</evidence>
<evidence type="ECO:0000255" key="2">
    <source>
        <dbReference type="PROSITE-ProRule" id="PRU00153"/>
    </source>
</evidence>
<evidence type="ECO:0000255" key="3">
    <source>
        <dbReference type="PROSITE-ProRule" id="PRU00448"/>
    </source>
</evidence>
<evidence type="ECO:0000256" key="4">
    <source>
        <dbReference type="SAM" id="MobiDB-lite"/>
    </source>
</evidence>
<evidence type="ECO:0000269" key="5">
    <source>
    </source>
</evidence>
<evidence type="ECO:0000269" key="6">
    <source>
    </source>
</evidence>
<evidence type="ECO:0000269" key="7">
    <source>
    </source>
</evidence>
<evidence type="ECO:0000269" key="8">
    <source>
    </source>
</evidence>
<evidence type="ECO:0000269" key="9">
    <source>
    </source>
</evidence>
<evidence type="ECO:0000305" key="10"/>